<proteinExistence type="evidence at transcript level"/>
<comment type="induction">
    <text>During nodulation in legume roots after Rhizobium infection.</text>
</comment>
<comment type="similarity">
    <text evidence="3">Belongs to the nodulin 20 family.</text>
</comment>
<accession>P04144</accession>
<protein>
    <recommendedName>
        <fullName>Nodulin-23</fullName>
        <shortName>N-23</shortName>
    </recommendedName>
</protein>
<feature type="signal peptide" evidence="1">
    <location>
        <begin position="1"/>
        <end position="17"/>
    </location>
</feature>
<feature type="chain" id="PRO_0000019788" description="Nodulin-23">
    <location>
        <begin position="18"/>
        <end position="220"/>
    </location>
</feature>
<feature type="region of interest" description="Disordered" evidence="2">
    <location>
        <begin position="99"/>
        <end position="120"/>
    </location>
</feature>
<name>NO23_SOYBN</name>
<reference key="1">
    <citation type="journal article" date="1985" name="Nucleic Acids Res.">
        <title>Primary structure of the soybean nodulin-23 gene and potential regulatory elements in the 5'-flanking regions of nodulin and leghemoglobin genes.</title>
        <authorList>
            <person name="Mauro V.P."/>
            <person name="Nguyen T."/>
            <person name="Katinakis P."/>
            <person name="Verma D.P.S."/>
        </authorList>
    </citation>
    <scope>NUCLEOTIDE SEQUENCE [GENOMIC DNA]</scope>
</reference>
<organism>
    <name type="scientific">Glycine max</name>
    <name type="common">Soybean</name>
    <name type="synonym">Glycine hispida</name>
    <dbReference type="NCBI Taxonomy" id="3847"/>
    <lineage>
        <taxon>Eukaryota</taxon>
        <taxon>Viridiplantae</taxon>
        <taxon>Streptophyta</taxon>
        <taxon>Embryophyta</taxon>
        <taxon>Tracheophyta</taxon>
        <taxon>Spermatophyta</taxon>
        <taxon>Magnoliopsida</taxon>
        <taxon>eudicotyledons</taxon>
        <taxon>Gunneridae</taxon>
        <taxon>Pentapetalae</taxon>
        <taxon>rosids</taxon>
        <taxon>fabids</taxon>
        <taxon>Fabales</taxon>
        <taxon>Fabaceae</taxon>
        <taxon>Papilionoideae</taxon>
        <taxon>50 kb inversion clade</taxon>
        <taxon>NPAAA clade</taxon>
        <taxon>indigoferoid/millettioid clade</taxon>
        <taxon>Phaseoleae</taxon>
        <taxon>Glycine</taxon>
        <taxon>Glycine subgen. Soja</taxon>
    </lineage>
</organism>
<evidence type="ECO:0000255" key="1"/>
<evidence type="ECO:0000256" key="2">
    <source>
        <dbReference type="SAM" id="MobiDB-lite"/>
    </source>
</evidence>
<evidence type="ECO:0000305" key="3"/>
<sequence length="220" mass="23915">MRVIVITVFLFIGAAIAEDVGIGLLSEAEAYVSPKLKKFITPCTSHVGETCSTTSSSGSEALMQNQGGLLFAFRFYGEMLGRPCAQLYQTSVTNLQVEPSEVFPRKNNPQGGRKSKLDDHQVQPLSFRLPPFRLPPMPKLGPTSPIIRTIPSPPIAPRDLSLIETIQLRTALRTCTHVTARTCLTAPNVATSDLEACLTPSMNQCIYPRGAEYGSPPIRA</sequence>
<dbReference type="EMBL" id="X01704">
    <property type="protein sequence ID" value="CAA25856.1"/>
    <property type="molecule type" value="Genomic_DNA"/>
</dbReference>
<dbReference type="PIR" id="A23036">
    <property type="entry name" value="A23036"/>
</dbReference>
<dbReference type="STRING" id="3847.P04144"/>
<dbReference type="InParanoid" id="P04144"/>
<dbReference type="Proteomes" id="UP000008827">
    <property type="component" value="Unplaced"/>
</dbReference>
<dbReference type="GO" id="GO:0009877">
    <property type="term" value="P:nodulation"/>
    <property type="evidence" value="ECO:0007669"/>
    <property type="project" value="UniProtKB-KW"/>
</dbReference>
<dbReference type="InterPro" id="IPR003387">
    <property type="entry name" value="Nodulin"/>
</dbReference>
<dbReference type="Pfam" id="PF02451">
    <property type="entry name" value="Nodulin"/>
    <property type="match status" value="2"/>
</dbReference>
<keyword id="KW-0536">Nodulation</keyword>
<keyword id="KW-1185">Reference proteome</keyword>
<keyword id="KW-0732">Signal</keyword>